<gene>
    <name evidence="1" type="primary">infA</name>
    <name type="ordered locus">Krad_0711</name>
</gene>
<name>IF1_KINRD</name>
<proteinExistence type="inferred from homology"/>
<accession>A6W5W1</accession>
<reference key="1">
    <citation type="journal article" date="2008" name="PLoS ONE">
        <title>Survival in nuclear waste, extreme resistance, and potential applications gleaned from the genome sequence of Kineococcus radiotolerans SRS30216.</title>
        <authorList>
            <person name="Bagwell C.E."/>
            <person name="Bhat S."/>
            <person name="Hawkins G.M."/>
            <person name="Smith B.W."/>
            <person name="Biswas T."/>
            <person name="Hoover T.R."/>
            <person name="Saunders E."/>
            <person name="Han C.S."/>
            <person name="Tsodikov O.V."/>
            <person name="Shimkets L.J."/>
        </authorList>
    </citation>
    <scope>NUCLEOTIDE SEQUENCE [LARGE SCALE GENOMIC DNA]</scope>
    <source>
        <strain>ATCC BAA-149 / DSM 14245 / SRS30216</strain>
    </source>
</reference>
<organism>
    <name type="scientific">Kineococcus radiotolerans (strain ATCC BAA-149 / DSM 14245 / SRS30216)</name>
    <dbReference type="NCBI Taxonomy" id="266940"/>
    <lineage>
        <taxon>Bacteria</taxon>
        <taxon>Bacillati</taxon>
        <taxon>Actinomycetota</taxon>
        <taxon>Actinomycetes</taxon>
        <taxon>Kineosporiales</taxon>
        <taxon>Kineosporiaceae</taxon>
        <taxon>Kineococcus</taxon>
    </lineage>
</organism>
<protein>
    <recommendedName>
        <fullName evidence="1">Translation initiation factor IF-1</fullName>
    </recommendedName>
</protein>
<comment type="function">
    <text evidence="1">One of the essential components for the initiation of protein synthesis. Stabilizes the binding of IF-2 and IF-3 on the 30S subunit to which N-formylmethionyl-tRNA(fMet) subsequently binds. Helps modulate mRNA selection, yielding the 30S pre-initiation complex (PIC). Upon addition of the 50S ribosomal subunit IF-1, IF-2 and IF-3 are released leaving the mature 70S translation initiation complex.</text>
</comment>
<comment type="subunit">
    <text evidence="1">Component of the 30S ribosomal translation pre-initiation complex which assembles on the 30S ribosome in the order IF-2 and IF-3, IF-1 and N-formylmethionyl-tRNA(fMet); mRNA recruitment can occur at any time during PIC assembly.</text>
</comment>
<comment type="subcellular location">
    <subcellularLocation>
        <location evidence="1">Cytoplasm</location>
    </subcellularLocation>
</comment>
<comment type="similarity">
    <text evidence="1">Belongs to the IF-1 family.</text>
</comment>
<dbReference type="EMBL" id="CP000750">
    <property type="protein sequence ID" value="ABS02200.1"/>
    <property type="molecule type" value="Genomic_DNA"/>
</dbReference>
<dbReference type="RefSeq" id="WP_012084955.1">
    <property type="nucleotide sequence ID" value="NC_009664.2"/>
</dbReference>
<dbReference type="SMR" id="A6W5W1"/>
<dbReference type="STRING" id="266940.Krad_0711"/>
<dbReference type="KEGG" id="kra:Krad_0711"/>
<dbReference type="eggNOG" id="COG0361">
    <property type="taxonomic scope" value="Bacteria"/>
</dbReference>
<dbReference type="HOGENOM" id="CLU_151267_1_0_11"/>
<dbReference type="OrthoDB" id="9803250at2"/>
<dbReference type="Proteomes" id="UP000001116">
    <property type="component" value="Chromosome"/>
</dbReference>
<dbReference type="GO" id="GO:0005829">
    <property type="term" value="C:cytosol"/>
    <property type="evidence" value="ECO:0007669"/>
    <property type="project" value="TreeGrafter"/>
</dbReference>
<dbReference type="GO" id="GO:0043022">
    <property type="term" value="F:ribosome binding"/>
    <property type="evidence" value="ECO:0007669"/>
    <property type="project" value="UniProtKB-UniRule"/>
</dbReference>
<dbReference type="GO" id="GO:0019843">
    <property type="term" value="F:rRNA binding"/>
    <property type="evidence" value="ECO:0007669"/>
    <property type="project" value="UniProtKB-UniRule"/>
</dbReference>
<dbReference type="GO" id="GO:0003743">
    <property type="term" value="F:translation initiation factor activity"/>
    <property type="evidence" value="ECO:0007669"/>
    <property type="project" value="UniProtKB-UniRule"/>
</dbReference>
<dbReference type="CDD" id="cd04451">
    <property type="entry name" value="S1_IF1"/>
    <property type="match status" value="1"/>
</dbReference>
<dbReference type="FunFam" id="2.40.50.140:FF:000002">
    <property type="entry name" value="Translation initiation factor IF-1"/>
    <property type="match status" value="1"/>
</dbReference>
<dbReference type="Gene3D" id="2.40.50.140">
    <property type="entry name" value="Nucleic acid-binding proteins"/>
    <property type="match status" value="1"/>
</dbReference>
<dbReference type="HAMAP" id="MF_00075">
    <property type="entry name" value="IF_1"/>
    <property type="match status" value="1"/>
</dbReference>
<dbReference type="InterPro" id="IPR012340">
    <property type="entry name" value="NA-bd_OB-fold"/>
</dbReference>
<dbReference type="InterPro" id="IPR006196">
    <property type="entry name" value="RNA-binding_domain_S1_IF1"/>
</dbReference>
<dbReference type="InterPro" id="IPR003029">
    <property type="entry name" value="S1_domain"/>
</dbReference>
<dbReference type="InterPro" id="IPR004368">
    <property type="entry name" value="TIF_IF1"/>
</dbReference>
<dbReference type="NCBIfam" id="TIGR00008">
    <property type="entry name" value="infA"/>
    <property type="match status" value="1"/>
</dbReference>
<dbReference type="PANTHER" id="PTHR33370">
    <property type="entry name" value="TRANSLATION INITIATION FACTOR IF-1, CHLOROPLASTIC"/>
    <property type="match status" value="1"/>
</dbReference>
<dbReference type="PANTHER" id="PTHR33370:SF1">
    <property type="entry name" value="TRANSLATION INITIATION FACTOR IF-1, CHLOROPLASTIC"/>
    <property type="match status" value="1"/>
</dbReference>
<dbReference type="Pfam" id="PF01176">
    <property type="entry name" value="eIF-1a"/>
    <property type="match status" value="1"/>
</dbReference>
<dbReference type="SMART" id="SM00316">
    <property type="entry name" value="S1"/>
    <property type="match status" value="1"/>
</dbReference>
<dbReference type="SUPFAM" id="SSF50249">
    <property type="entry name" value="Nucleic acid-binding proteins"/>
    <property type="match status" value="1"/>
</dbReference>
<dbReference type="PROSITE" id="PS50832">
    <property type="entry name" value="S1_IF1_TYPE"/>
    <property type="match status" value="1"/>
</dbReference>
<sequence>MPKKDGVIEIEGTVIEALPNAMFRVELSNGHKVLAHISGKMRQHYIRILPEDRVVVELSPYDLSRGRIVYRYK</sequence>
<evidence type="ECO:0000255" key="1">
    <source>
        <dbReference type="HAMAP-Rule" id="MF_00075"/>
    </source>
</evidence>
<keyword id="KW-0963">Cytoplasm</keyword>
<keyword id="KW-0396">Initiation factor</keyword>
<keyword id="KW-0648">Protein biosynthesis</keyword>
<keyword id="KW-1185">Reference proteome</keyword>
<keyword id="KW-0694">RNA-binding</keyword>
<keyword id="KW-0699">rRNA-binding</keyword>
<feature type="chain" id="PRO_0000338841" description="Translation initiation factor IF-1">
    <location>
        <begin position="1"/>
        <end position="73"/>
    </location>
</feature>
<feature type="domain" description="S1-like" evidence="1">
    <location>
        <begin position="1"/>
        <end position="73"/>
    </location>
</feature>